<organism>
    <name type="scientific">Mycobacterium leprae (strain TN)</name>
    <dbReference type="NCBI Taxonomy" id="272631"/>
    <lineage>
        <taxon>Bacteria</taxon>
        <taxon>Bacillati</taxon>
        <taxon>Actinomycetota</taxon>
        <taxon>Actinomycetes</taxon>
        <taxon>Mycobacteriales</taxon>
        <taxon>Mycobacteriaceae</taxon>
        <taxon>Mycobacterium</taxon>
    </lineage>
</organism>
<keyword id="KW-0046">Antibiotic resistance</keyword>
<keyword id="KW-1003">Cell membrane</keyword>
<keyword id="KW-0472">Membrane</keyword>
<keyword id="KW-1185">Reference proteome</keyword>
<keyword id="KW-0812">Transmembrane</keyword>
<keyword id="KW-1133">Transmembrane helix</keyword>
<keyword id="KW-0813">Transport</keyword>
<comment type="function">
    <text evidence="1">Multidrug efflux pump. Confers resistance to tetraphenylphosphonium (TPP), erythromycin, ethidium bromide, acriflavine, safranin O and pyronin Y (By similarity).</text>
</comment>
<comment type="subcellular location">
    <subcellularLocation>
        <location evidence="3">Cell membrane</location>
        <topology evidence="3">Multi-pass membrane protein</topology>
    </subcellularLocation>
</comment>
<comment type="similarity">
    <text evidence="3">Belongs to the drug/metabolite transporter (DMT) superfamily. Small multidrug resistance (SMR) (TC 2.A.7.1) family. Mmr subfamily.</text>
</comment>
<proteinExistence type="inferred from homology"/>
<gene>
    <name type="primary">mmr</name>
    <name type="ordered locus">ML1756</name>
</gene>
<protein>
    <recommendedName>
        <fullName>Multidrug resistance protein mmr</fullName>
    </recommendedName>
</protein>
<accession>Q9CBP1</accession>
<feature type="chain" id="PRO_0000108118" description="Multidrug resistance protein mmr">
    <location>
        <begin position="1"/>
        <end position="107"/>
    </location>
</feature>
<feature type="transmembrane region" description="Helical" evidence="2">
    <location>
        <begin position="2"/>
        <end position="19"/>
    </location>
</feature>
<feature type="transmembrane region" description="Helical" evidence="2">
    <location>
        <begin position="29"/>
        <end position="51"/>
    </location>
</feature>
<feature type="transmembrane region" description="Helical" evidence="2">
    <location>
        <begin position="58"/>
        <end position="77"/>
    </location>
</feature>
<feature type="transmembrane region" description="Helical" evidence="2">
    <location>
        <begin position="82"/>
        <end position="104"/>
    </location>
</feature>
<reference key="1">
    <citation type="journal article" date="2001" name="Nature">
        <title>Massive gene decay in the leprosy bacillus.</title>
        <authorList>
            <person name="Cole S.T."/>
            <person name="Eiglmeier K."/>
            <person name="Parkhill J."/>
            <person name="James K.D."/>
            <person name="Thomson N.R."/>
            <person name="Wheeler P.R."/>
            <person name="Honore N."/>
            <person name="Garnier T."/>
            <person name="Churcher C.M."/>
            <person name="Harris D.E."/>
            <person name="Mungall K.L."/>
            <person name="Basham D."/>
            <person name="Brown D."/>
            <person name="Chillingworth T."/>
            <person name="Connor R."/>
            <person name="Davies R.M."/>
            <person name="Devlin K."/>
            <person name="Duthoy S."/>
            <person name="Feltwell T."/>
            <person name="Fraser A."/>
            <person name="Hamlin N."/>
            <person name="Holroyd S."/>
            <person name="Hornsby T."/>
            <person name="Jagels K."/>
            <person name="Lacroix C."/>
            <person name="Maclean J."/>
            <person name="Moule S."/>
            <person name="Murphy L.D."/>
            <person name="Oliver K."/>
            <person name="Quail M.A."/>
            <person name="Rajandream M.A."/>
            <person name="Rutherford K.M."/>
            <person name="Rutter S."/>
            <person name="Seeger K."/>
            <person name="Simon S."/>
            <person name="Simmonds M."/>
            <person name="Skelton J."/>
            <person name="Squares R."/>
            <person name="Squares S."/>
            <person name="Stevens K."/>
            <person name="Taylor K."/>
            <person name="Whitehead S."/>
            <person name="Woodward J.R."/>
            <person name="Barrell B.G."/>
        </authorList>
    </citation>
    <scope>NUCLEOTIDE SEQUENCE [LARGE SCALE GENOMIC DNA]</scope>
    <source>
        <strain>TN</strain>
    </source>
</reference>
<sequence length="107" mass="11191">MAYLFLFCAIFVEVVATTLLKSTEGFTRLVPTLACLAGYAVTFTLLALSISRGMKTDVAYALWSAIGTAAIVLIAVLFLDSPVSVAKVVGVALIIVGVITLNLADAH</sequence>
<evidence type="ECO:0000250" key="1"/>
<evidence type="ECO:0000255" key="2"/>
<evidence type="ECO:0000305" key="3"/>
<name>MMR_MYCLE</name>
<dbReference type="EMBL" id="AL583923">
    <property type="protein sequence ID" value="CAC30709.1"/>
    <property type="molecule type" value="Genomic_DNA"/>
</dbReference>
<dbReference type="RefSeq" id="NP_302204.1">
    <property type="nucleotide sequence ID" value="NC_002677.1"/>
</dbReference>
<dbReference type="RefSeq" id="WP_010908525.1">
    <property type="nucleotide sequence ID" value="NC_002677.1"/>
</dbReference>
<dbReference type="SMR" id="Q9CBP1"/>
<dbReference type="STRING" id="272631.gene:17575601"/>
<dbReference type="KEGG" id="mle:ML1756"/>
<dbReference type="PATRIC" id="fig|272631.5.peg.3315"/>
<dbReference type="Leproma" id="ML1756"/>
<dbReference type="eggNOG" id="COG2076">
    <property type="taxonomic scope" value="Bacteria"/>
</dbReference>
<dbReference type="HOGENOM" id="CLU_133067_0_1_11"/>
<dbReference type="OrthoDB" id="21828at2"/>
<dbReference type="Proteomes" id="UP000000806">
    <property type="component" value="Chromosome"/>
</dbReference>
<dbReference type="GO" id="GO:0005886">
    <property type="term" value="C:plasma membrane"/>
    <property type="evidence" value="ECO:0007669"/>
    <property type="project" value="UniProtKB-SubCell"/>
</dbReference>
<dbReference type="GO" id="GO:0022857">
    <property type="term" value="F:transmembrane transporter activity"/>
    <property type="evidence" value="ECO:0007669"/>
    <property type="project" value="InterPro"/>
</dbReference>
<dbReference type="GO" id="GO:0046677">
    <property type="term" value="P:response to antibiotic"/>
    <property type="evidence" value="ECO:0007669"/>
    <property type="project" value="UniProtKB-KW"/>
</dbReference>
<dbReference type="FunFam" id="1.10.3730.20:FF:000001">
    <property type="entry name" value="Quaternary ammonium compound resistance transporter SugE"/>
    <property type="match status" value="1"/>
</dbReference>
<dbReference type="Gene3D" id="1.10.3730.20">
    <property type="match status" value="1"/>
</dbReference>
<dbReference type="InterPro" id="IPR000390">
    <property type="entry name" value="Small_drug/metabolite_transptr"/>
</dbReference>
<dbReference type="InterPro" id="IPR045324">
    <property type="entry name" value="Small_multidrug_res"/>
</dbReference>
<dbReference type="PANTHER" id="PTHR30561:SF1">
    <property type="entry name" value="MULTIDRUG TRANSPORTER EMRE"/>
    <property type="match status" value="1"/>
</dbReference>
<dbReference type="PANTHER" id="PTHR30561">
    <property type="entry name" value="SMR FAMILY PROTON-DEPENDENT DRUG EFFLUX TRANSPORTER SUGE"/>
    <property type="match status" value="1"/>
</dbReference>
<dbReference type="Pfam" id="PF00893">
    <property type="entry name" value="Multi_Drug_Res"/>
    <property type="match status" value="1"/>
</dbReference>
<dbReference type="SUPFAM" id="SSF103481">
    <property type="entry name" value="Multidrug resistance efflux transporter EmrE"/>
    <property type="match status" value="1"/>
</dbReference>